<protein>
    <recommendedName>
        <fullName evidence="1">Probable sugar efflux transporter</fullName>
    </recommendedName>
</protein>
<dbReference type="EMBL" id="CP001217">
    <property type="protein sequence ID" value="ACJ08303.1"/>
    <property type="molecule type" value="Genomic_DNA"/>
</dbReference>
<dbReference type="SMR" id="B6JN25"/>
<dbReference type="KEGG" id="hpp:HPP12_1151"/>
<dbReference type="HOGENOM" id="CLU_001265_61_1_7"/>
<dbReference type="Proteomes" id="UP000008198">
    <property type="component" value="Chromosome"/>
</dbReference>
<dbReference type="GO" id="GO:0005886">
    <property type="term" value="C:plasma membrane"/>
    <property type="evidence" value="ECO:0007669"/>
    <property type="project" value="UniProtKB-SubCell"/>
</dbReference>
<dbReference type="GO" id="GO:0015144">
    <property type="term" value="F:carbohydrate transmembrane transporter activity"/>
    <property type="evidence" value="ECO:0007669"/>
    <property type="project" value="UniProtKB-UniRule"/>
</dbReference>
<dbReference type="CDD" id="cd17324">
    <property type="entry name" value="MFS_NepI_like"/>
    <property type="match status" value="1"/>
</dbReference>
<dbReference type="Gene3D" id="1.20.1250.20">
    <property type="entry name" value="MFS general substrate transporter like domains"/>
    <property type="match status" value="1"/>
</dbReference>
<dbReference type="HAMAP" id="MF_00517">
    <property type="entry name" value="MFS_SotB"/>
    <property type="match status" value="1"/>
</dbReference>
<dbReference type="InterPro" id="IPR011701">
    <property type="entry name" value="MFS"/>
</dbReference>
<dbReference type="InterPro" id="IPR020846">
    <property type="entry name" value="MFS_dom"/>
</dbReference>
<dbReference type="InterPro" id="IPR050189">
    <property type="entry name" value="MFS_Efflux_Transporters"/>
</dbReference>
<dbReference type="InterPro" id="IPR036259">
    <property type="entry name" value="MFS_trans_sf"/>
</dbReference>
<dbReference type="InterPro" id="IPR023495">
    <property type="entry name" value="Sugar_effux_transptr_put"/>
</dbReference>
<dbReference type="NCBIfam" id="NF002921">
    <property type="entry name" value="PRK03545.1"/>
    <property type="match status" value="1"/>
</dbReference>
<dbReference type="PANTHER" id="PTHR43124">
    <property type="entry name" value="PURINE EFFLUX PUMP PBUE"/>
    <property type="match status" value="1"/>
</dbReference>
<dbReference type="PANTHER" id="PTHR43124:SF4">
    <property type="entry name" value="SUGAR EFFLUX TRANSPORTER"/>
    <property type="match status" value="1"/>
</dbReference>
<dbReference type="Pfam" id="PF07690">
    <property type="entry name" value="MFS_1"/>
    <property type="match status" value="1"/>
</dbReference>
<dbReference type="SUPFAM" id="SSF103473">
    <property type="entry name" value="MFS general substrate transporter"/>
    <property type="match status" value="1"/>
</dbReference>
<dbReference type="PROSITE" id="PS50850">
    <property type="entry name" value="MFS"/>
    <property type="match status" value="1"/>
</dbReference>
<comment type="function">
    <text evidence="1">Involved in the efflux of sugars. The physiological role may be the reduction of the intracellular concentration of toxic sugars or sugar metabolites.</text>
</comment>
<comment type="subcellular location">
    <subcellularLocation>
        <location evidence="1">Cell inner membrane</location>
        <topology evidence="1">Multi-pass membrane protein</topology>
    </subcellularLocation>
</comment>
<comment type="similarity">
    <text evidence="1">Belongs to the major facilitator superfamily. SotB (TC 2.A.1.2) family.</text>
</comment>
<keyword id="KW-0997">Cell inner membrane</keyword>
<keyword id="KW-1003">Cell membrane</keyword>
<keyword id="KW-0472">Membrane</keyword>
<keyword id="KW-0762">Sugar transport</keyword>
<keyword id="KW-0812">Transmembrane</keyword>
<keyword id="KW-1133">Transmembrane helix</keyword>
<keyword id="KW-0813">Transport</keyword>
<feature type="chain" id="PRO_1000127464" description="Probable sugar efflux transporter">
    <location>
        <begin position="1"/>
        <end position="391"/>
    </location>
</feature>
<feature type="transmembrane region" description="Helical" evidence="1">
    <location>
        <begin position="16"/>
        <end position="36"/>
    </location>
</feature>
<feature type="transmembrane region" description="Helical" evidence="1">
    <location>
        <begin position="51"/>
        <end position="71"/>
    </location>
</feature>
<feature type="transmembrane region" description="Helical" evidence="1">
    <location>
        <begin position="82"/>
        <end position="102"/>
    </location>
</feature>
<feature type="transmembrane region" description="Helical" evidence="1">
    <location>
        <begin position="103"/>
        <end position="123"/>
    </location>
</feature>
<feature type="transmembrane region" description="Helical" evidence="1">
    <location>
        <begin position="138"/>
        <end position="158"/>
    </location>
</feature>
<feature type="transmembrane region" description="Helical" evidence="1">
    <location>
        <begin position="170"/>
        <end position="190"/>
    </location>
</feature>
<feature type="transmembrane region" description="Helical" evidence="1">
    <location>
        <begin position="210"/>
        <end position="230"/>
    </location>
</feature>
<feature type="transmembrane region" description="Helical" evidence="1">
    <location>
        <begin position="247"/>
        <end position="267"/>
    </location>
</feature>
<feature type="transmembrane region" description="Helical" evidence="1">
    <location>
        <begin position="277"/>
        <end position="297"/>
    </location>
</feature>
<feature type="transmembrane region" description="Helical" evidence="1">
    <location>
        <begin position="300"/>
        <end position="320"/>
    </location>
</feature>
<feature type="transmembrane region" description="Helical" evidence="1">
    <location>
        <begin position="338"/>
        <end position="358"/>
    </location>
</feature>
<feature type="transmembrane region" description="Helical" evidence="1">
    <location>
        <begin position="361"/>
        <end position="381"/>
    </location>
</feature>
<reference key="1">
    <citation type="submission" date="2008-10" db="EMBL/GenBank/DDBJ databases">
        <title>The complete genome sequence of Helicobacter pylori strain P12.</title>
        <authorList>
            <person name="Fischer W."/>
            <person name="Windhager L."/>
            <person name="Karnholz A."/>
            <person name="Zeiller M."/>
            <person name="Zimmer R."/>
            <person name="Haas R."/>
        </authorList>
    </citation>
    <scope>NUCLEOTIDE SEQUENCE [LARGE SCALE GENOMIC DNA]</scope>
    <source>
        <strain>P12</strain>
    </source>
</reference>
<name>SOTB_HELP2</name>
<organism>
    <name type="scientific">Helicobacter pylori (strain P12)</name>
    <dbReference type="NCBI Taxonomy" id="570508"/>
    <lineage>
        <taxon>Bacteria</taxon>
        <taxon>Pseudomonadati</taxon>
        <taxon>Campylobacterota</taxon>
        <taxon>Epsilonproteobacteria</taxon>
        <taxon>Campylobacterales</taxon>
        <taxon>Helicobacteraceae</taxon>
        <taxon>Helicobacter</taxon>
    </lineage>
</organism>
<evidence type="ECO:0000255" key="1">
    <source>
        <dbReference type="HAMAP-Rule" id="MF_00517"/>
    </source>
</evidence>
<accession>B6JN25</accession>
<gene>
    <name evidence="1" type="primary">sotB</name>
    <name type="ordered locus">HPP12_1151</name>
</gene>
<proteinExistence type="inferred from homology"/>
<sequence length="391" mass="43208">MMITKQSYQKFALMRVFVFSLSAFIFNTTEFVPVALLSDIAKSFEMESATVGLMITAYAWVVSLGSLPLMLLSAKIERKRLLLFLFALFILSHILSALAWNFWVLLISRMGIAFAHSIFWSITASLVIRVAPRNKKQQALGLLALGSSLAMILGLPLGRIIGQILDWRSTFGVIGGVATLIMLLMWKLLPHLPSRNAGTLASVPVLMKRPLLVGIYLLVIMVISGHFTTYSYIEPFIIQISQFSPDITTLMLFVFGLAGVAGSFLFGRLYAKNSRKFIAFAMVLVICPQLLLFVFKNLEWVIFLQIFLWGIGITSLTIALQMRVLQLAPDATDVASAIFSGSYNVGIGSGALFGSIVIHQLGLEYIGFVGGALGLLALFWLRFITIKFKKT</sequence>